<proteinExistence type="evidence at protein level"/>
<organism>
    <name type="scientific">Bartonella henselae (strain ATCC 49882 / DSM 28221 / CCUG 30454 / Houston 1)</name>
    <name type="common">Rochalimaea henselae</name>
    <dbReference type="NCBI Taxonomy" id="283166"/>
    <lineage>
        <taxon>Bacteria</taxon>
        <taxon>Pseudomonadati</taxon>
        <taxon>Pseudomonadota</taxon>
        <taxon>Alphaproteobacteria</taxon>
        <taxon>Hyphomicrobiales</taxon>
        <taxon>Bartonellaceae</taxon>
        <taxon>Bartonella</taxon>
    </lineage>
</organism>
<comment type="function">
    <text evidence="3 5">The type IV secretion system VirB/VirD4 is a major virulence determinant for subversion of human endothelial cell (HEC) function. VirB-dependent changes of HEC include massive cytoskeletal rearrangements, a pro-inflammatory activation by nuclear factor NF-kappa-B, inhibition of early and late events of apoptosis, leading to an increased cell survival, and, at high infection doses, a cytostatic or cytotoxic effect, which interferes with a potent VirB-independent mitogenic activity. These changes of HEC require the T4S coupling protein VirD4 and at least one of the effector proteins BepA-G. Altogether with VirB11, may be implicated in providing the energy, via hydrolysis of ATP, for the assembly of secretion system and substrate transport.</text>
</comment>
<comment type="subunit">
    <text evidence="4">Interacts with virB10.</text>
</comment>
<comment type="subcellular location">
    <subcellularLocation>
        <location evidence="6">Cell inner membrane</location>
    </subcellularLocation>
</comment>
<comment type="induction">
    <text evidence="2">During the interaction with the intracellular environment of host cells.</text>
</comment>
<comment type="similarity">
    <text evidence="6">Belongs to the TrbE/VirB4 family.</text>
</comment>
<evidence type="ECO:0000255" key="1"/>
<evidence type="ECO:0000269" key="2">
    <source>
    </source>
</evidence>
<evidence type="ECO:0000269" key="3">
    <source>
    </source>
</evidence>
<evidence type="ECO:0000269" key="4">
    <source>
    </source>
</evidence>
<evidence type="ECO:0000269" key="5">
    <source>
    </source>
</evidence>
<evidence type="ECO:0000305" key="6"/>
<sequence length="784" mass="89097">MSMMKRESLPEDYIPYIRHINQHVIALNSRCLMTVMVVEGVNFDTADIDQLNSLHNQLNTLLKNIADERVALYSHIIRRRETIYPESQFFSSFAATLDEKYKKKMVSQELYRNDLFVSLLWNPASDKTEQLASFFQRLAKAKKTQSEPDQEAIRKIEELSQDLIEGLESYGARLLSVYAHGGILFSEQSEFLHQLVGGRRERIPLTFGTIASTIYSDRVIFGKETIEIRHESNERFAGMFGWKEYPSKTRPGMTDGLLTAPFEFILTQSFVFKSKAAASVIMGRKQNQMINAADRASSQIEALDEALDDLESNRFVLGEHHLSLAVFANHPKALAEYLSKARAHLTNGGAVIAREDLGLEAAWWAQLPGNFSYRARSGAITSRNFAALSPFHSFPIGKLEGNVWGTAVALLKTQAGSPYYFNFHYGDLGNTFVCGPSGSGKTVIVNFLLAQLQKHNPTMVFFDKDQGAEIFVRAGGGKYKPLKNGQPTGIAPLKGMEYTEKNKVFLRNWVLKLVTAEGQTVTEEERQDIAKAIDALGNLPHAQRSLSALQLFFDNTSKEGIAIRLQRWLKGNDLGWVFDNDQDDLNLDSQFIGYDMTDFLDNEEIRRPLMMYLFNRILDLIDGRRIIIVIDEFWKALEDDSFKAFAQDRLKTIRKQNGMMLFATQSPKDALNSTIAHTIIEQCPTQIFFPNQKANYKDYVEDFKLTEREFELIQSELSRESRRFLIKQGQSSVVAELNLRGMNDEIAVLSGTTKNIELVNQIISEYGADPDIWLPIFHQRRENQ</sequence>
<name>VIRB4_BARHE</name>
<dbReference type="EMBL" id="U23447">
    <property type="protein sequence ID" value="AAD48921.1"/>
    <property type="molecule type" value="Genomic_DNA"/>
</dbReference>
<dbReference type="EMBL" id="AF182718">
    <property type="protein sequence ID" value="AAF00942.1"/>
    <property type="molecule type" value="Genomic_DNA"/>
</dbReference>
<dbReference type="EMBL" id="BX897699">
    <property type="protein sequence ID" value="CAF28101.1"/>
    <property type="molecule type" value="Genomic_DNA"/>
</dbReference>
<dbReference type="RefSeq" id="WP_011181129.1">
    <property type="nucleotide sequence ID" value="NZ_LRIJ02000001.1"/>
</dbReference>
<dbReference type="SMR" id="Q9R2W4"/>
<dbReference type="PaxDb" id="283166-BH13280"/>
<dbReference type="EnsemblBacteria" id="CAF28101">
    <property type="protein sequence ID" value="CAF28101"/>
    <property type="gene ID" value="BH13280"/>
</dbReference>
<dbReference type="KEGG" id="bhe:BH13280"/>
<dbReference type="eggNOG" id="COG3451">
    <property type="taxonomic scope" value="Bacteria"/>
</dbReference>
<dbReference type="OrthoDB" id="9816422at2"/>
<dbReference type="Proteomes" id="UP000000421">
    <property type="component" value="Chromosome"/>
</dbReference>
<dbReference type="GO" id="GO:0005886">
    <property type="term" value="C:plasma membrane"/>
    <property type="evidence" value="ECO:0007669"/>
    <property type="project" value="UniProtKB-SubCell"/>
</dbReference>
<dbReference type="GO" id="GO:0005524">
    <property type="term" value="F:ATP binding"/>
    <property type="evidence" value="ECO:0007669"/>
    <property type="project" value="UniProtKB-KW"/>
</dbReference>
<dbReference type="GO" id="GO:0016887">
    <property type="term" value="F:ATP hydrolysis activity"/>
    <property type="evidence" value="ECO:0007669"/>
    <property type="project" value="InterPro"/>
</dbReference>
<dbReference type="CDD" id="cd01127">
    <property type="entry name" value="TrwB_TraG_TraD_VirD4"/>
    <property type="match status" value="1"/>
</dbReference>
<dbReference type="Gene3D" id="3.40.50.300">
    <property type="entry name" value="P-loop containing nucleotide triphosphate hydrolases"/>
    <property type="match status" value="2"/>
</dbReference>
<dbReference type="InterPro" id="IPR003593">
    <property type="entry name" value="AAA+_ATPase"/>
</dbReference>
<dbReference type="InterPro" id="IPR004346">
    <property type="entry name" value="CagE_TrbE_VirB"/>
</dbReference>
<dbReference type="InterPro" id="IPR018145">
    <property type="entry name" value="CagE_TrbE_VirB_cntrl_dom"/>
</dbReference>
<dbReference type="InterPro" id="IPR027417">
    <property type="entry name" value="P-loop_NTPase"/>
</dbReference>
<dbReference type="InterPro" id="IPR043964">
    <property type="entry name" value="P-loop_TraG"/>
</dbReference>
<dbReference type="InterPro" id="IPR051162">
    <property type="entry name" value="T4SS_component"/>
</dbReference>
<dbReference type="NCBIfam" id="TIGR00929">
    <property type="entry name" value="VirB4_CagE"/>
    <property type="match status" value="1"/>
</dbReference>
<dbReference type="PANTHER" id="PTHR30121:SF12">
    <property type="entry name" value="TYPE IV SECRETION SYSTEM PROTEIN CAGE"/>
    <property type="match status" value="1"/>
</dbReference>
<dbReference type="PANTHER" id="PTHR30121">
    <property type="entry name" value="UNCHARACTERIZED PROTEIN YJGR-RELATED"/>
    <property type="match status" value="1"/>
</dbReference>
<dbReference type="Pfam" id="PF03135">
    <property type="entry name" value="CagE_TrbE_VirB"/>
    <property type="match status" value="1"/>
</dbReference>
<dbReference type="Pfam" id="PF19044">
    <property type="entry name" value="P-loop_TraG"/>
    <property type="match status" value="1"/>
</dbReference>
<dbReference type="SMART" id="SM00382">
    <property type="entry name" value="AAA"/>
    <property type="match status" value="1"/>
</dbReference>
<dbReference type="SUPFAM" id="SSF52540">
    <property type="entry name" value="P-loop containing nucleoside triphosphate hydrolases"/>
    <property type="match status" value="1"/>
</dbReference>
<reference key="1">
    <citation type="journal article" date="2000" name="DNA Cell Biol.">
        <title>Cloning, sequencing, and expression of three Bartonella henselae genes homologous to the Agrobacterium tumefaciens VirB region.</title>
        <authorList>
            <person name="Schmiederer M."/>
            <person name="Anderson B.E."/>
        </authorList>
    </citation>
    <scope>NUCLEOTIDE SEQUENCE [GENOMIC DNA]</scope>
    <source>
        <strain>ATCC 49882 / DSM 28221 / CCUG 30454 / Houston 1</strain>
    </source>
</reference>
<reference key="2">
    <citation type="journal article" date="2000" name="DNA Cell Biol.">
        <title>The gene encoding the 17-kDa antigen of Bartonella henselae is located within a cluster of genes homologous to the virB virulence operon.</title>
        <authorList>
            <person name="Padmalayam I."/>
            <person name="Karem K."/>
            <person name="Baumstark B.R."/>
            <person name="Massung R."/>
        </authorList>
    </citation>
    <scope>NUCLEOTIDE SEQUENCE [GENOMIC DNA]</scope>
    <source>
        <strain>ATCC 49882 / DSM 28221 / CCUG 30454 / Houston 1</strain>
    </source>
</reference>
<reference key="3">
    <citation type="journal article" date="2004" name="Proc. Natl. Acad. Sci. U.S.A.">
        <title>The louse-borne human pathogen Bartonella quintana is a genomic derivative of the zoonotic agent Bartonella henselae.</title>
        <authorList>
            <person name="Alsmark U.C.M."/>
            <person name="Frank A.C."/>
            <person name="Karlberg E.O."/>
            <person name="Legault B.-A."/>
            <person name="Ardell D.H."/>
            <person name="Canbaeck B."/>
            <person name="Eriksson A.-S."/>
            <person name="Naeslund A.K."/>
            <person name="Handley S.A."/>
            <person name="Huvet M."/>
            <person name="La Scola B."/>
            <person name="Holmberg M."/>
            <person name="Andersson S.G.E."/>
        </authorList>
    </citation>
    <scope>NUCLEOTIDE SEQUENCE [LARGE SCALE GENOMIC DNA]</scope>
    <source>
        <strain>ATCC 49882 / DSM 28221 / CCUG 30454 / Houston 1</strain>
    </source>
</reference>
<reference key="4">
    <citation type="journal article" date="1995" name="J. Clin. Microbiol.">
        <title>Characterization of a 17-kilodalton antigen of Bartonella henselae reactive with sera from patients with cat scratch disease.</title>
        <authorList>
            <person name="Anderson B.E."/>
            <person name="Lu E."/>
            <person name="Jones D."/>
            <person name="Regnery R."/>
        </authorList>
    </citation>
    <scope>NUCLEOTIDE SEQUENCE [GENOMIC DNA] OF 732-784</scope>
    <source>
        <strain>ATCC 49882 / DSM 28221 / CCUG 30454 / Houston 1</strain>
    </source>
</reference>
<reference key="5">
    <citation type="journal article" date="2001" name="Infect. Immun.">
        <title>Intracellular induction of the Bartonella henselae virB operon by human endothelial cells.</title>
        <authorList>
            <person name="Schmiederer M."/>
            <person name="Arcenas R."/>
            <person name="Widen R."/>
            <person name="Valkov N."/>
            <person name="Anderson B.E."/>
        </authorList>
    </citation>
    <scope>INDUCTION</scope>
    <source>
        <strain>ATCC 49882 / DSM 28221 / CCUG 30454 / Houston 1</strain>
    </source>
</reference>
<reference key="6">
    <citation type="journal article" date="2004" name="J. Bacteriol.">
        <title>Interaction between protein subunits of the type IV secretion system of Bartonella henselae.</title>
        <authorList>
            <person name="Shamaei-Tousi A."/>
            <person name="Cahill R."/>
            <person name="Frankel G."/>
        </authorList>
    </citation>
    <scope>INTERACTION WITH VIRB10</scope>
</reference>
<reference key="7">
    <citation type="journal article" date="2004" name="Mol. Microbiol.">
        <title>The VirB type IV secretion system of Bartonella henselae mediates invasion, proinflammatory activation and antiapoptotic protection of endothelial cells.</title>
        <authorList>
            <person name="Schmid M.C."/>
            <person name="Schulein R."/>
            <person name="Dehio M."/>
            <person name="Denecker G."/>
            <person name="Carena I."/>
            <person name="Dehio C."/>
        </authorList>
    </citation>
    <scope>FUNCTION</scope>
    <source>
        <strain>ATCC 49882 / DSM 28221 / CCUG 30454 / Houston 1</strain>
    </source>
</reference>
<reference key="8">
    <citation type="journal article" date="2005" name="Proc. Natl. Acad. Sci. U.S.A.">
        <title>A bipartite signal mediates the transfer of type IV secretion substrates of Bartonella henselae into human cells.</title>
        <authorList>
            <person name="Schulein R."/>
            <person name="Guye P."/>
            <person name="Rhomberg T.A."/>
            <person name="Schmid M.C."/>
            <person name="Schroeder G."/>
            <person name="Vergunst A.C."/>
            <person name="Carena I."/>
            <person name="Dehio C."/>
        </authorList>
    </citation>
    <scope>FUNCTION</scope>
    <source>
        <strain>ATCC 49882 / DSM 28221 / CCUG 30454 / Houston 1</strain>
    </source>
</reference>
<feature type="chain" id="PRO_0000273535" description="Type IV secretion system protein virB4">
    <location>
        <begin position="1"/>
        <end position="784"/>
    </location>
</feature>
<feature type="binding site" evidence="1">
    <location>
        <begin position="435"/>
        <end position="442"/>
    </location>
    <ligand>
        <name>ATP</name>
        <dbReference type="ChEBI" id="CHEBI:30616"/>
    </ligand>
</feature>
<gene>
    <name type="primary">virB4</name>
    <name type="ordered locus">BH13280</name>
</gene>
<protein>
    <recommendedName>
        <fullName>Type IV secretion system protein virB4</fullName>
    </recommendedName>
</protein>
<keyword id="KW-0067">ATP-binding</keyword>
<keyword id="KW-0997">Cell inner membrane</keyword>
<keyword id="KW-1003">Cell membrane</keyword>
<keyword id="KW-0472">Membrane</keyword>
<keyword id="KW-0547">Nucleotide-binding</keyword>
<keyword id="KW-0813">Transport</keyword>
<keyword id="KW-0843">Virulence</keyword>
<accession>Q9R2W4</accession>